<organism>
    <name type="scientific">Drosophila ananassae</name>
    <name type="common">Fruit fly</name>
    <dbReference type="NCBI Taxonomy" id="7217"/>
    <lineage>
        <taxon>Eukaryota</taxon>
        <taxon>Metazoa</taxon>
        <taxon>Ecdysozoa</taxon>
        <taxon>Arthropoda</taxon>
        <taxon>Hexapoda</taxon>
        <taxon>Insecta</taxon>
        <taxon>Pterygota</taxon>
        <taxon>Neoptera</taxon>
        <taxon>Endopterygota</taxon>
        <taxon>Diptera</taxon>
        <taxon>Brachycera</taxon>
        <taxon>Muscomorpha</taxon>
        <taxon>Ephydroidea</taxon>
        <taxon>Drosophilidae</taxon>
        <taxon>Drosophila</taxon>
        <taxon>Sophophora</taxon>
    </lineage>
</organism>
<gene>
    <name evidence="1" type="primary">caly</name>
    <name evidence="1" type="synonym">BAP1</name>
    <name type="ORF">GF12763</name>
</gene>
<protein>
    <recommendedName>
        <fullName evidence="1">Ubiquitin carboxyl-terminal hydrolase calypso</fullName>
        <ecNumber evidence="1">3.4.19.12</ecNumber>
    </recommendedName>
    <alternativeName>
        <fullName evidence="1">BRCA1-associated protein 1 homolog</fullName>
        <shortName evidence="1">BAP1 homolog</shortName>
    </alternativeName>
    <alternativeName>
        <fullName evidence="1">Polycomb group protein calypso</fullName>
    </alternativeName>
</protein>
<comment type="function">
    <text evidence="1">Catalytic component of the polycomb repressive deubiquitinase (PR-DUB) complex, a complex that specifically mediates deubiquitination of histone H2A monoubiquitinated at 'Lys-119' (H2AK118ub1). Mediates bisymmetric organization of the PR-DUB complex and is involved in association with nucleosomes to mediate deubiquitination. Does not deubiquitinate monoubiquitinated histone H2B. Required to maintain the transcriptionally repressive state of homeotic genes throughout development. The PR-DUB complex has weak or no activity toward 'Lys-48'- and 'Lys-63'-linked polyubiquitin chains. Polycomb group (PcG) protein.</text>
</comment>
<comment type="catalytic activity">
    <reaction evidence="1">
        <text>Thiol-dependent hydrolysis of ester, thioester, amide, peptide and isopeptide bonds formed by the C-terminal Gly of ubiquitin (a 76-residue protein attached to proteins as an intracellular targeting signal).</text>
        <dbReference type="EC" id="3.4.19.12"/>
    </reaction>
</comment>
<comment type="subunit">
    <text evidence="1">Catalytic component of the polycomb repressive deubiquitinase (PR-DUB) complex, at least composed of caly/calypso, Asx and sba (MBD5/6 homolog). The PR-DUB complex associates with nucleosomes to mediate deubiquitination of histone H2AK118ub1 substrates; the association requires the positively charged C-terminal tail of caly, probably due to direct binding of DNA. Interacts (via ULD domain) with Asx (via DEUBAD domain); the interaction produces a stable heterodimer with a composite binding site for ubiquitin. Homodimerizes (via coiled-coil hinge-region between the UCH and ULD domains) to mediate assembly of 2 copies of the caly-Asx heterodimer into a bisymmetric tetramer; dimerization enhances PR-DUB association with nucleosomes.</text>
</comment>
<comment type="subcellular location">
    <subcellularLocation>
        <location evidence="1">Nucleus</location>
    </subcellularLocation>
    <text evidence="1">Localizes to PcG response elements (PREs).</text>
</comment>
<comment type="similarity">
    <text evidence="5">Belongs to the peptidase C12 family. BAP1 subfamily.</text>
</comment>
<keyword id="KW-0156">Chromatin regulator</keyword>
<keyword id="KW-0378">Hydrolase</keyword>
<keyword id="KW-0539">Nucleus</keyword>
<keyword id="KW-0645">Protease</keyword>
<keyword id="KW-1185">Reference proteome</keyword>
<keyword id="KW-0788">Thiol protease</keyword>
<keyword id="KW-0833">Ubl conjugation pathway</keyword>
<evidence type="ECO:0000250" key="1">
    <source>
        <dbReference type="UniProtKB" id="Q7K5N4"/>
    </source>
</evidence>
<evidence type="ECO:0000255" key="2">
    <source>
        <dbReference type="PROSITE-ProRule" id="PRU01393"/>
    </source>
</evidence>
<evidence type="ECO:0000255" key="3">
    <source>
        <dbReference type="PROSITE-ProRule" id="PRU01394"/>
    </source>
</evidence>
<evidence type="ECO:0000256" key="4">
    <source>
        <dbReference type="SAM" id="MobiDB-lite"/>
    </source>
</evidence>
<evidence type="ECO:0000305" key="5"/>
<proteinExistence type="inferred from homology"/>
<dbReference type="EC" id="3.4.19.12" evidence="1"/>
<dbReference type="EMBL" id="CH902619">
    <property type="protein sequence ID" value="EDV36019.1"/>
    <property type="molecule type" value="Genomic_DNA"/>
</dbReference>
<dbReference type="SMR" id="B3MIV9"/>
<dbReference type="FunCoup" id="B3MIV9">
    <property type="interactions" value="1225"/>
</dbReference>
<dbReference type="STRING" id="7217.B3MIV9"/>
<dbReference type="MEROPS" id="C12.A09"/>
<dbReference type="EnsemblMetazoa" id="FBtr0117463">
    <property type="protein sequence ID" value="FBpp0115955"/>
    <property type="gene ID" value="FBgn0089797"/>
</dbReference>
<dbReference type="EnsemblMetazoa" id="XM_001959161.4">
    <property type="protein sequence ID" value="XP_001959197.2"/>
    <property type="gene ID" value="LOC6495610"/>
</dbReference>
<dbReference type="GeneID" id="6495610"/>
<dbReference type="KEGG" id="dan:6495610"/>
<dbReference type="CTD" id="136037741"/>
<dbReference type="eggNOG" id="KOG2778">
    <property type="taxonomic scope" value="Eukaryota"/>
</dbReference>
<dbReference type="HOGENOM" id="CLU_018316_2_1_1"/>
<dbReference type="InParanoid" id="B3MIV9"/>
<dbReference type="OMA" id="MNHGCWE"/>
<dbReference type="OrthoDB" id="1924260at2759"/>
<dbReference type="PhylomeDB" id="B3MIV9"/>
<dbReference type="Proteomes" id="UP000007801">
    <property type="component" value="Unassembled WGS sequence"/>
</dbReference>
<dbReference type="GO" id="GO:0000785">
    <property type="term" value="C:chromatin"/>
    <property type="evidence" value="ECO:0000250"/>
    <property type="project" value="UniProtKB"/>
</dbReference>
<dbReference type="GO" id="GO:0005737">
    <property type="term" value="C:cytoplasm"/>
    <property type="evidence" value="ECO:0007669"/>
    <property type="project" value="TreeGrafter"/>
</dbReference>
<dbReference type="GO" id="GO:0035517">
    <property type="term" value="C:PR-DUB complex"/>
    <property type="evidence" value="ECO:0000250"/>
    <property type="project" value="UniProtKB"/>
</dbReference>
<dbReference type="GO" id="GO:0003682">
    <property type="term" value="F:chromatin binding"/>
    <property type="evidence" value="ECO:0000250"/>
    <property type="project" value="UniProtKB"/>
</dbReference>
<dbReference type="GO" id="GO:0004843">
    <property type="term" value="F:cysteine-type deubiquitinase activity"/>
    <property type="evidence" value="ECO:0000250"/>
    <property type="project" value="UniProtKB"/>
</dbReference>
<dbReference type="GO" id="GO:0040029">
    <property type="term" value="P:epigenetic regulation of gene expression"/>
    <property type="evidence" value="ECO:0000250"/>
    <property type="project" value="UniProtKB"/>
</dbReference>
<dbReference type="GO" id="GO:0031507">
    <property type="term" value="P:heterochromatin formation"/>
    <property type="evidence" value="ECO:0000250"/>
    <property type="project" value="UniProtKB"/>
</dbReference>
<dbReference type="GO" id="GO:0016579">
    <property type="term" value="P:protein deubiquitination"/>
    <property type="evidence" value="ECO:0007669"/>
    <property type="project" value="TreeGrafter"/>
</dbReference>
<dbReference type="GO" id="GO:0007385">
    <property type="term" value="P:specification of segmental identity, abdomen"/>
    <property type="evidence" value="ECO:0007669"/>
    <property type="project" value="EnsemblMetazoa"/>
</dbReference>
<dbReference type="GO" id="GO:0006511">
    <property type="term" value="P:ubiquitin-dependent protein catabolic process"/>
    <property type="evidence" value="ECO:0007669"/>
    <property type="project" value="InterPro"/>
</dbReference>
<dbReference type="CDD" id="cd09617">
    <property type="entry name" value="Peptidase_C12_UCH37_BAP1"/>
    <property type="match status" value="1"/>
</dbReference>
<dbReference type="FunFam" id="3.40.532.10:FF:000002">
    <property type="entry name" value="Ubiquitin carboxyl-terminal hydrolase"/>
    <property type="match status" value="1"/>
</dbReference>
<dbReference type="FunFam" id="1.20.58.860:FF:000004">
    <property type="entry name" value="Ubiquitin carboxyl-terminal hydrolase calypso"/>
    <property type="match status" value="1"/>
</dbReference>
<dbReference type="Gene3D" id="1.20.58.860">
    <property type="match status" value="1"/>
</dbReference>
<dbReference type="Gene3D" id="3.40.532.10">
    <property type="entry name" value="Peptidase C12, ubiquitin carboxyl-terminal hydrolase"/>
    <property type="match status" value="1"/>
</dbReference>
<dbReference type="InterPro" id="IPR038765">
    <property type="entry name" value="Papain-like_cys_pep_sf"/>
</dbReference>
<dbReference type="InterPro" id="IPR001578">
    <property type="entry name" value="Peptidase_C12_UCH"/>
</dbReference>
<dbReference type="InterPro" id="IPR036959">
    <property type="entry name" value="Peptidase_C12_UCH_sf"/>
</dbReference>
<dbReference type="InterPro" id="IPR041507">
    <property type="entry name" value="UCH_C"/>
</dbReference>
<dbReference type="PANTHER" id="PTHR10589">
    <property type="entry name" value="UBIQUITIN CARBOXYL-TERMINAL HYDROLASE"/>
    <property type="match status" value="1"/>
</dbReference>
<dbReference type="PANTHER" id="PTHR10589:SF28">
    <property type="entry name" value="UBIQUITIN CARBOXYL-TERMINAL HYDROLASE BAP1"/>
    <property type="match status" value="1"/>
</dbReference>
<dbReference type="Pfam" id="PF01088">
    <property type="entry name" value="Peptidase_C12"/>
    <property type="match status" value="1"/>
</dbReference>
<dbReference type="Pfam" id="PF18031">
    <property type="entry name" value="UCH_C"/>
    <property type="match status" value="1"/>
</dbReference>
<dbReference type="PRINTS" id="PR00707">
    <property type="entry name" value="UBCTHYDRLASE"/>
</dbReference>
<dbReference type="SUPFAM" id="SSF54001">
    <property type="entry name" value="Cysteine proteinases"/>
    <property type="match status" value="1"/>
</dbReference>
<dbReference type="PROSITE" id="PS52048">
    <property type="entry name" value="UCH_DOMAIN"/>
    <property type="match status" value="1"/>
</dbReference>
<dbReference type="PROSITE" id="PS52049">
    <property type="entry name" value="ULD"/>
    <property type="match status" value="1"/>
</dbReference>
<name>CALYP_DROAN</name>
<accession>B3MIV9</accession>
<reference key="1">
    <citation type="journal article" date="2007" name="Nature">
        <title>Evolution of genes and genomes on the Drosophila phylogeny.</title>
        <authorList>
            <consortium name="Drosophila 12 genomes consortium"/>
        </authorList>
    </citation>
    <scope>NUCLEOTIDE SEQUENCE [LARGE SCALE GENOMIC DNA]</scope>
    <source>
        <strain>Tucson 14024-0371.13</strain>
    </source>
</reference>
<feature type="chain" id="PRO_0000395826" description="Ubiquitin carboxyl-terminal hydrolase calypso">
    <location>
        <begin position="1"/>
        <end position="470"/>
    </location>
</feature>
<feature type="domain" description="UCH catalytic" evidence="2">
    <location>
        <begin position="43"/>
        <end position="274"/>
    </location>
</feature>
<feature type="domain" description="ULD" evidence="3">
    <location>
        <begin position="373"/>
        <end position="401"/>
    </location>
</feature>
<feature type="region of interest" description="Disordered" evidence="4">
    <location>
        <begin position="305"/>
        <end position="324"/>
    </location>
</feature>
<feature type="region of interest" description="Positively charged C-terminal tail required for binding nucleosomes" evidence="1">
    <location>
        <begin position="403"/>
        <end position="470"/>
    </location>
</feature>
<feature type="region of interest" description="Disordered" evidence="4">
    <location>
        <begin position="422"/>
        <end position="470"/>
    </location>
</feature>
<feature type="compositionally biased region" description="Low complexity" evidence="4">
    <location>
        <begin position="422"/>
        <end position="451"/>
    </location>
</feature>
<feature type="compositionally biased region" description="Basic residues" evidence="4">
    <location>
        <begin position="456"/>
        <end position="470"/>
    </location>
</feature>
<feature type="active site" description="Nucleophile" evidence="2">
    <location>
        <position position="129"/>
    </location>
</feature>
<feature type="active site" description="Proton donor" evidence="2">
    <location>
        <position position="211"/>
    </location>
</feature>
<feature type="site" description="Transition state stabilizer" evidence="2">
    <location>
        <position position="123"/>
    </location>
</feature>
<feature type="site" description="Important for enzyme activity" evidence="2">
    <location>
        <position position="226"/>
    </location>
</feature>
<sequence length="470" mass="51537">MNMTGGGAGPQAGPNSSCNIPNSSLLATAPVAATMPIAQLADGWLELESDPGLFTLLLEDFGCHDVQVEEVYDLQKPIESPYGFIFLFRWIEERRARRKIVETTAEIFVKDEEAISSIFFAQQVVPNSCATHALLSVLLNCNENNLQLGDTLSRLKAHTKGMSPENKGLAIGNTPELACAHNSHAMPQARRRLERTGAGVSSCRFTGEAFHFVSFVPINGQLFELDGLKPYPMNHGGWEDHEDWTDKFRRVMTERLGIATGEQDIRFNLMAVVPDRRIAITHKLKMLRTNQAIVSGTLQKLLKADEQGEGGNGDPQRPDTPSTLLEPSAFTARDLQSLLKNLDTEIAINEQHLADENDRRHKFKVDASRRTHNYDKFICTFLSMLAHQGVLGELVSQHLLPSKKISGQSAANRLNKQSNATANAGATAAGAAGAAPKSQQQQAAAAKNGKSPSKTPGRRRKGRNKCKKRK</sequence>